<protein>
    <recommendedName>
        <fullName evidence="1">NAD kinase</fullName>
        <ecNumber evidence="1">2.7.1.23</ecNumber>
    </recommendedName>
    <alternativeName>
        <fullName evidence="1">ATP-dependent NAD kinase</fullName>
    </alternativeName>
</protein>
<feature type="chain" id="PRO_1000079510" description="NAD kinase">
    <location>
        <begin position="1"/>
        <end position="309"/>
    </location>
</feature>
<feature type="active site" description="Proton acceptor" evidence="1">
    <location>
        <position position="89"/>
    </location>
</feature>
<feature type="binding site" evidence="1">
    <location>
        <begin position="89"/>
        <end position="90"/>
    </location>
    <ligand>
        <name>NAD(+)</name>
        <dbReference type="ChEBI" id="CHEBI:57540"/>
    </ligand>
</feature>
<feature type="binding site" evidence="1">
    <location>
        <begin position="163"/>
        <end position="164"/>
    </location>
    <ligand>
        <name>NAD(+)</name>
        <dbReference type="ChEBI" id="CHEBI:57540"/>
    </ligand>
</feature>
<feature type="binding site" evidence="1">
    <location>
        <position position="174"/>
    </location>
    <ligand>
        <name>NAD(+)</name>
        <dbReference type="ChEBI" id="CHEBI:57540"/>
    </ligand>
</feature>
<feature type="binding site" evidence="1">
    <location>
        <position position="191"/>
    </location>
    <ligand>
        <name>NAD(+)</name>
        <dbReference type="ChEBI" id="CHEBI:57540"/>
    </ligand>
</feature>
<feature type="binding site" evidence="1">
    <location>
        <position position="193"/>
    </location>
    <ligand>
        <name>NAD(+)</name>
        <dbReference type="ChEBI" id="CHEBI:57540"/>
    </ligand>
</feature>
<feature type="binding site" evidence="1">
    <location>
        <begin position="204"/>
        <end position="209"/>
    </location>
    <ligand>
        <name>NAD(+)</name>
        <dbReference type="ChEBI" id="CHEBI:57540"/>
    </ligand>
</feature>
<sequence>MGINFDVSRPKARSSINMITKFHTIGLIGKPHHQGTNQTLKRLHHWLTMQGFEVLVEERVAAELGPNIEAVDLLEIGARCDLAIVVGGDGNMLGAARVLARFDLGVIGVNRGNLGFLTDLPPDAFEEALAKVLDGEFDTEHRFLLEAEVYRHGMLKASNTAVNEAVLHPGKIAHMIEFEVYIDDQFMYSQRADGMIVSTPTGSTAYALSAGGAILTPNLQALILVPMFPHTLSCRPIVVDACSTIKMVVSPDNGENLEVSCDGHVHLAVLPGDEIIVRRSSERLRLIHPKGHNYFHVLRTKLGWGSKLF</sequence>
<reference key="1">
    <citation type="submission" date="2007-07" db="EMBL/GenBank/DDBJ databases">
        <title>Complete sequence of chromosome of Shewanella baltica OS185.</title>
        <authorList>
            <consortium name="US DOE Joint Genome Institute"/>
            <person name="Copeland A."/>
            <person name="Lucas S."/>
            <person name="Lapidus A."/>
            <person name="Barry K."/>
            <person name="Glavina del Rio T."/>
            <person name="Dalin E."/>
            <person name="Tice H."/>
            <person name="Pitluck S."/>
            <person name="Sims D."/>
            <person name="Brettin T."/>
            <person name="Bruce D."/>
            <person name="Detter J.C."/>
            <person name="Han C."/>
            <person name="Schmutz J."/>
            <person name="Larimer F."/>
            <person name="Land M."/>
            <person name="Hauser L."/>
            <person name="Kyrpides N."/>
            <person name="Mikhailova N."/>
            <person name="Brettar I."/>
            <person name="Rodrigues J."/>
            <person name="Konstantinidis K."/>
            <person name="Tiedje J."/>
            <person name="Richardson P."/>
        </authorList>
    </citation>
    <scope>NUCLEOTIDE SEQUENCE [LARGE SCALE GENOMIC DNA]</scope>
    <source>
        <strain>OS185</strain>
    </source>
</reference>
<comment type="function">
    <text evidence="1">Involved in the regulation of the intracellular balance of NAD and NADP, and is a key enzyme in the biosynthesis of NADP. Catalyzes specifically the phosphorylation on 2'-hydroxyl of the adenosine moiety of NAD to yield NADP.</text>
</comment>
<comment type="catalytic activity">
    <reaction evidence="1">
        <text>NAD(+) + ATP = ADP + NADP(+) + H(+)</text>
        <dbReference type="Rhea" id="RHEA:18629"/>
        <dbReference type="ChEBI" id="CHEBI:15378"/>
        <dbReference type="ChEBI" id="CHEBI:30616"/>
        <dbReference type="ChEBI" id="CHEBI:57540"/>
        <dbReference type="ChEBI" id="CHEBI:58349"/>
        <dbReference type="ChEBI" id="CHEBI:456216"/>
        <dbReference type="EC" id="2.7.1.23"/>
    </reaction>
</comment>
<comment type="cofactor">
    <cofactor evidence="1">
        <name>a divalent metal cation</name>
        <dbReference type="ChEBI" id="CHEBI:60240"/>
    </cofactor>
</comment>
<comment type="subcellular location">
    <subcellularLocation>
        <location evidence="1">Cytoplasm</location>
    </subcellularLocation>
</comment>
<comment type="similarity">
    <text evidence="1">Belongs to the NAD kinase family.</text>
</comment>
<gene>
    <name evidence="1" type="primary">nadK</name>
    <name type="ordered locus">Shew185_1341</name>
</gene>
<accession>A6WL02</accession>
<proteinExistence type="inferred from homology"/>
<evidence type="ECO:0000255" key="1">
    <source>
        <dbReference type="HAMAP-Rule" id="MF_00361"/>
    </source>
</evidence>
<keyword id="KW-0067">ATP-binding</keyword>
<keyword id="KW-0963">Cytoplasm</keyword>
<keyword id="KW-0418">Kinase</keyword>
<keyword id="KW-0520">NAD</keyword>
<keyword id="KW-0521">NADP</keyword>
<keyword id="KW-0547">Nucleotide-binding</keyword>
<keyword id="KW-0808">Transferase</keyword>
<organism>
    <name type="scientific">Shewanella baltica (strain OS185)</name>
    <dbReference type="NCBI Taxonomy" id="402882"/>
    <lineage>
        <taxon>Bacteria</taxon>
        <taxon>Pseudomonadati</taxon>
        <taxon>Pseudomonadota</taxon>
        <taxon>Gammaproteobacteria</taxon>
        <taxon>Alteromonadales</taxon>
        <taxon>Shewanellaceae</taxon>
        <taxon>Shewanella</taxon>
    </lineage>
</organism>
<dbReference type="EC" id="2.7.1.23" evidence="1"/>
<dbReference type="EMBL" id="CP000753">
    <property type="protein sequence ID" value="ABS07491.1"/>
    <property type="molecule type" value="Genomic_DNA"/>
</dbReference>
<dbReference type="SMR" id="A6WL02"/>
<dbReference type="KEGG" id="sbm:Shew185_1341"/>
<dbReference type="HOGENOM" id="CLU_008831_0_1_6"/>
<dbReference type="GO" id="GO:0005737">
    <property type="term" value="C:cytoplasm"/>
    <property type="evidence" value="ECO:0007669"/>
    <property type="project" value="UniProtKB-SubCell"/>
</dbReference>
<dbReference type="GO" id="GO:0005524">
    <property type="term" value="F:ATP binding"/>
    <property type="evidence" value="ECO:0007669"/>
    <property type="project" value="UniProtKB-KW"/>
</dbReference>
<dbReference type="GO" id="GO:0046872">
    <property type="term" value="F:metal ion binding"/>
    <property type="evidence" value="ECO:0007669"/>
    <property type="project" value="UniProtKB-UniRule"/>
</dbReference>
<dbReference type="GO" id="GO:0051287">
    <property type="term" value="F:NAD binding"/>
    <property type="evidence" value="ECO:0007669"/>
    <property type="project" value="UniProtKB-ARBA"/>
</dbReference>
<dbReference type="GO" id="GO:0003951">
    <property type="term" value="F:NAD+ kinase activity"/>
    <property type="evidence" value="ECO:0007669"/>
    <property type="project" value="UniProtKB-UniRule"/>
</dbReference>
<dbReference type="GO" id="GO:0019674">
    <property type="term" value="P:NAD metabolic process"/>
    <property type="evidence" value="ECO:0007669"/>
    <property type="project" value="InterPro"/>
</dbReference>
<dbReference type="GO" id="GO:0006741">
    <property type="term" value="P:NADP biosynthetic process"/>
    <property type="evidence" value="ECO:0007669"/>
    <property type="project" value="UniProtKB-UniRule"/>
</dbReference>
<dbReference type="FunFam" id="2.60.200.30:FF:000001">
    <property type="entry name" value="NAD kinase"/>
    <property type="match status" value="1"/>
</dbReference>
<dbReference type="Gene3D" id="3.40.50.10330">
    <property type="entry name" value="Probable inorganic polyphosphate/atp-NAD kinase, domain 1"/>
    <property type="match status" value="1"/>
</dbReference>
<dbReference type="Gene3D" id="2.60.200.30">
    <property type="entry name" value="Probable inorganic polyphosphate/atp-NAD kinase, domain 2"/>
    <property type="match status" value="1"/>
</dbReference>
<dbReference type="HAMAP" id="MF_00361">
    <property type="entry name" value="NAD_kinase"/>
    <property type="match status" value="1"/>
</dbReference>
<dbReference type="InterPro" id="IPR017438">
    <property type="entry name" value="ATP-NAD_kinase_N"/>
</dbReference>
<dbReference type="InterPro" id="IPR017437">
    <property type="entry name" value="ATP-NAD_kinase_PpnK-typ_C"/>
</dbReference>
<dbReference type="InterPro" id="IPR016064">
    <property type="entry name" value="NAD/diacylglycerol_kinase_sf"/>
</dbReference>
<dbReference type="InterPro" id="IPR002504">
    <property type="entry name" value="NADK"/>
</dbReference>
<dbReference type="NCBIfam" id="NF002306">
    <property type="entry name" value="PRK01231.1"/>
    <property type="match status" value="1"/>
</dbReference>
<dbReference type="NCBIfam" id="NF002893">
    <property type="entry name" value="PRK03378.1"/>
    <property type="match status" value="1"/>
</dbReference>
<dbReference type="PANTHER" id="PTHR20275">
    <property type="entry name" value="NAD KINASE"/>
    <property type="match status" value="1"/>
</dbReference>
<dbReference type="PANTHER" id="PTHR20275:SF0">
    <property type="entry name" value="NAD KINASE"/>
    <property type="match status" value="1"/>
</dbReference>
<dbReference type="Pfam" id="PF01513">
    <property type="entry name" value="NAD_kinase"/>
    <property type="match status" value="1"/>
</dbReference>
<dbReference type="Pfam" id="PF20143">
    <property type="entry name" value="NAD_kinase_C"/>
    <property type="match status" value="1"/>
</dbReference>
<dbReference type="SUPFAM" id="SSF111331">
    <property type="entry name" value="NAD kinase/diacylglycerol kinase-like"/>
    <property type="match status" value="1"/>
</dbReference>
<name>NADK_SHEB8</name>